<organism>
    <name type="scientific">Leptothrix cholodnii (strain ATCC 51168 / LMG 8142 / SP-6)</name>
    <name type="common">Leptothrix discophora (strain SP-6)</name>
    <dbReference type="NCBI Taxonomy" id="395495"/>
    <lineage>
        <taxon>Bacteria</taxon>
        <taxon>Pseudomonadati</taxon>
        <taxon>Pseudomonadota</taxon>
        <taxon>Betaproteobacteria</taxon>
        <taxon>Burkholderiales</taxon>
        <taxon>Sphaerotilaceae</taxon>
        <taxon>Leptothrix</taxon>
    </lineage>
</organism>
<feature type="chain" id="PRO_0000350236" description="Probable RNA methyltransferase Lcho_2507">
    <location>
        <begin position="1"/>
        <end position="347"/>
    </location>
</feature>
<feature type="domain" description="Radical SAM core" evidence="3">
    <location>
        <begin position="92"/>
        <end position="318"/>
    </location>
</feature>
<feature type="active site" description="Proton acceptor" evidence="2">
    <location>
        <position position="89"/>
    </location>
</feature>
<feature type="active site" description="S-methylcysteine intermediate" evidence="1">
    <location>
        <position position="323"/>
    </location>
</feature>
<feature type="binding site" evidence="1">
    <location>
        <position position="106"/>
    </location>
    <ligand>
        <name>[4Fe-4S] cluster</name>
        <dbReference type="ChEBI" id="CHEBI:49883"/>
        <note>4Fe-4S-S-AdoMet</note>
    </ligand>
</feature>
<feature type="binding site" evidence="1">
    <location>
        <position position="110"/>
    </location>
    <ligand>
        <name>[4Fe-4S] cluster</name>
        <dbReference type="ChEBI" id="CHEBI:49883"/>
        <note>4Fe-4S-S-AdoMet</note>
    </ligand>
</feature>
<feature type="binding site" evidence="1">
    <location>
        <position position="113"/>
    </location>
    <ligand>
        <name>[4Fe-4S] cluster</name>
        <dbReference type="ChEBI" id="CHEBI:49883"/>
        <note>4Fe-4S-S-AdoMet</note>
    </ligand>
</feature>
<feature type="binding site" evidence="1">
    <location>
        <begin position="151"/>
        <end position="152"/>
    </location>
    <ligand>
        <name>S-adenosyl-L-methionine</name>
        <dbReference type="ChEBI" id="CHEBI:59789"/>
    </ligand>
</feature>
<feature type="binding site" evidence="1">
    <location>
        <position position="181"/>
    </location>
    <ligand>
        <name>S-adenosyl-L-methionine</name>
        <dbReference type="ChEBI" id="CHEBI:59789"/>
    </ligand>
</feature>
<feature type="binding site" evidence="1">
    <location>
        <begin position="204"/>
        <end position="206"/>
    </location>
    <ligand>
        <name>S-adenosyl-L-methionine</name>
        <dbReference type="ChEBI" id="CHEBI:59789"/>
    </ligand>
</feature>
<feature type="binding site" evidence="1">
    <location>
        <position position="280"/>
    </location>
    <ligand>
        <name>S-adenosyl-L-methionine</name>
        <dbReference type="ChEBI" id="CHEBI:59789"/>
    </ligand>
</feature>
<feature type="disulfide bond" description="(transient)" evidence="1">
    <location>
        <begin position="99"/>
        <end position="323"/>
    </location>
</feature>
<comment type="cofactor">
    <cofactor evidence="1">
        <name>[4Fe-4S] cluster</name>
        <dbReference type="ChEBI" id="CHEBI:49883"/>
    </cofactor>
    <text evidence="1">Binds 1 [4Fe-4S] cluster. The cluster is coordinated with 3 cysteines and an exchangeable S-adenosyl-L-methionine.</text>
</comment>
<comment type="subcellular location">
    <subcellularLocation>
        <location evidence="4">Cytoplasm</location>
    </subcellularLocation>
</comment>
<comment type="similarity">
    <text evidence="4">Belongs to the radical SAM superfamily. RlmN family.</text>
</comment>
<reference key="1">
    <citation type="submission" date="2008-03" db="EMBL/GenBank/DDBJ databases">
        <title>Complete sequence of Leptothrix cholodnii SP-6.</title>
        <authorList>
            <consortium name="US DOE Joint Genome Institute"/>
            <person name="Copeland A."/>
            <person name="Lucas S."/>
            <person name="Lapidus A."/>
            <person name="Glavina del Rio T."/>
            <person name="Dalin E."/>
            <person name="Tice H."/>
            <person name="Bruce D."/>
            <person name="Goodwin L."/>
            <person name="Pitluck S."/>
            <person name="Chertkov O."/>
            <person name="Brettin T."/>
            <person name="Detter J.C."/>
            <person name="Han C."/>
            <person name="Kuske C.R."/>
            <person name="Schmutz J."/>
            <person name="Larimer F."/>
            <person name="Land M."/>
            <person name="Hauser L."/>
            <person name="Kyrpides N."/>
            <person name="Lykidis A."/>
            <person name="Emerson D."/>
            <person name="Richardson P."/>
        </authorList>
    </citation>
    <scope>NUCLEOTIDE SEQUENCE [LARGE SCALE GENOMIC DNA]</scope>
    <source>
        <strain>ATCC 51168 / LMG 8142 / SP-6</strain>
    </source>
</reference>
<proteinExistence type="inferred from homology"/>
<protein>
    <recommendedName>
        <fullName>Probable RNA methyltransferase Lcho_2507</fullName>
        <ecNumber>2.1.1.-</ecNumber>
    </recommendedName>
</protein>
<sequence length="347" mass="38067">MRIDFIRQRLRAQGAKPCHEQRILRIWAQVLPTEGGRSRPDDFLPQAVRDAMPALLADLDGLARLRSQHPGEDGSARLLVELADGQTVESVLLPRDGLCVSTQVGCAVGCVFCMTGREGLLRQVGSAEIVAQVVLARRQRLVKKVVFMGMGEPAHNLDNVMEAIDFLGTTGAIGHKNLVFSTVGDPRVFERLPLGPVKPALALSLHTTRADLRAQLLPRAPRMDPADLVERAEAYARATSYPIQYQWTLLEGINDGPDEVEGIVRLLHGKYAVLNMIPYNTVPDLPYTRPSWEAAAALARTLHRRGILTKLRQSAGQDVEGGCGQLRARELAPSARRIEIRPVASLP</sequence>
<keyword id="KW-0004">4Fe-4S</keyword>
<keyword id="KW-0963">Cytoplasm</keyword>
<keyword id="KW-1015">Disulfide bond</keyword>
<keyword id="KW-0408">Iron</keyword>
<keyword id="KW-0411">Iron-sulfur</keyword>
<keyword id="KW-0479">Metal-binding</keyword>
<keyword id="KW-0489">Methyltransferase</keyword>
<keyword id="KW-1185">Reference proteome</keyword>
<keyword id="KW-0949">S-adenosyl-L-methionine</keyword>
<keyword id="KW-0808">Transferase</keyword>
<evidence type="ECO:0000250" key="1"/>
<evidence type="ECO:0000255" key="2"/>
<evidence type="ECO:0000255" key="3">
    <source>
        <dbReference type="PROSITE-ProRule" id="PRU01266"/>
    </source>
</evidence>
<evidence type="ECO:0000305" key="4"/>
<name>Y2507_LEPCP</name>
<accession>B1Y6D6</accession>
<gene>
    <name type="ordered locus">Lcho_2507</name>
</gene>
<dbReference type="EC" id="2.1.1.-"/>
<dbReference type="EMBL" id="CP001013">
    <property type="protein sequence ID" value="ACB34772.1"/>
    <property type="molecule type" value="Genomic_DNA"/>
</dbReference>
<dbReference type="RefSeq" id="WP_012347528.1">
    <property type="nucleotide sequence ID" value="NC_010524.1"/>
</dbReference>
<dbReference type="SMR" id="B1Y6D6"/>
<dbReference type="STRING" id="395495.Lcho_2507"/>
<dbReference type="KEGG" id="lch:Lcho_2507"/>
<dbReference type="eggNOG" id="COG0820">
    <property type="taxonomic scope" value="Bacteria"/>
</dbReference>
<dbReference type="HOGENOM" id="CLU_029101_3_3_4"/>
<dbReference type="OrthoDB" id="9793973at2"/>
<dbReference type="Proteomes" id="UP000001693">
    <property type="component" value="Chromosome"/>
</dbReference>
<dbReference type="GO" id="GO:0005737">
    <property type="term" value="C:cytoplasm"/>
    <property type="evidence" value="ECO:0007669"/>
    <property type="project" value="UniProtKB-SubCell"/>
</dbReference>
<dbReference type="GO" id="GO:0051539">
    <property type="term" value="F:4 iron, 4 sulfur cluster binding"/>
    <property type="evidence" value="ECO:0007669"/>
    <property type="project" value="UniProtKB-KW"/>
</dbReference>
<dbReference type="GO" id="GO:0046872">
    <property type="term" value="F:metal ion binding"/>
    <property type="evidence" value="ECO:0007669"/>
    <property type="project" value="UniProtKB-KW"/>
</dbReference>
<dbReference type="GO" id="GO:0008173">
    <property type="term" value="F:RNA methyltransferase activity"/>
    <property type="evidence" value="ECO:0007669"/>
    <property type="project" value="InterPro"/>
</dbReference>
<dbReference type="GO" id="GO:0070475">
    <property type="term" value="P:rRNA base methylation"/>
    <property type="evidence" value="ECO:0007669"/>
    <property type="project" value="TreeGrafter"/>
</dbReference>
<dbReference type="GO" id="GO:0030488">
    <property type="term" value="P:tRNA methylation"/>
    <property type="evidence" value="ECO:0007669"/>
    <property type="project" value="TreeGrafter"/>
</dbReference>
<dbReference type="Gene3D" id="3.20.20.70">
    <property type="entry name" value="Aldolase class I"/>
    <property type="match status" value="1"/>
</dbReference>
<dbReference type="InterPro" id="IPR013785">
    <property type="entry name" value="Aldolase_TIM"/>
</dbReference>
<dbReference type="InterPro" id="IPR040072">
    <property type="entry name" value="Methyltransferase_A"/>
</dbReference>
<dbReference type="InterPro" id="IPR004383">
    <property type="entry name" value="rRNA_lsu_MTrfase_RlmN/Cfr"/>
</dbReference>
<dbReference type="InterPro" id="IPR007197">
    <property type="entry name" value="rSAM"/>
</dbReference>
<dbReference type="NCBIfam" id="NF011034">
    <property type="entry name" value="PRK14464.1"/>
    <property type="match status" value="1"/>
</dbReference>
<dbReference type="PANTHER" id="PTHR30544">
    <property type="entry name" value="23S RRNA METHYLTRANSFERASE"/>
    <property type="match status" value="1"/>
</dbReference>
<dbReference type="PANTHER" id="PTHR30544:SF5">
    <property type="entry name" value="RADICAL SAM CORE DOMAIN-CONTAINING PROTEIN"/>
    <property type="match status" value="1"/>
</dbReference>
<dbReference type="Pfam" id="PF04055">
    <property type="entry name" value="Radical_SAM"/>
    <property type="match status" value="1"/>
</dbReference>
<dbReference type="SFLD" id="SFLDF00275">
    <property type="entry name" value="adenosine_C2_methyltransferase"/>
    <property type="match status" value="1"/>
</dbReference>
<dbReference type="SFLD" id="SFLDG01062">
    <property type="entry name" value="methyltransferase_(Class_A)"/>
    <property type="match status" value="1"/>
</dbReference>
<dbReference type="SUPFAM" id="SSF102114">
    <property type="entry name" value="Radical SAM enzymes"/>
    <property type="match status" value="1"/>
</dbReference>
<dbReference type="PROSITE" id="PS51918">
    <property type="entry name" value="RADICAL_SAM"/>
    <property type="match status" value="1"/>
</dbReference>